<reference evidence="11" key="1">
    <citation type="journal article" date="2008" name="J. Neurosci.">
        <title>Behavioral impact of neurotransmitter-activated G-protein-coupled receptors: muscarinic and GABAB receptors regulate Caenorhabditis elegans locomotion.</title>
        <authorList>
            <person name="Dittman J.S."/>
            <person name="Kaplan J.M."/>
        </authorList>
    </citation>
    <scope>NUCLEOTIDE SEQUENCE [MRNA]</scope>
    <scope>FUNCTION</scope>
    <scope>SUBUNIT</scope>
    <scope>DISRUPTION PHENOTYPE</scope>
</reference>
<reference evidence="12" key="2">
    <citation type="journal article" date="1998" name="Science">
        <title>Genome sequence of the nematode C. elegans: a platform for investigating biology.</title>
        <authorList>
            <consortium name="The C. elegans sequencing consortium"/>
        </authorList>
    </citation>
    <scope>NUCLEOTIDE SEQUENCE [LARGE SCALE GENOMIC DNA]</scope>
    <source>
        <strain evidence="12">Bristol N2</strain>
    </source>
</reference>
<reference evidence="9" key="3">
    <citation type="journal article" date="2011" name="J. Neurophysiol.">
        <title>Optogenetic analysis of GABAB receptor signaling in Caenorhabditis elegans motor neurons.</title>
        <authorList>
            <person name="Schultheis C."/>
            <person name="Brauner M."/>
            <person name="Liewald J.F."/>
            <person name="Gottschalk A."/>
        </authorList>
    </citation>
    <scope>FUNCTION</scope>
    <scope>DISRUPTION PHENOTYPE</scope>
    <scope>MUTAGENESIS OF ALA-484 AND VAL-572</scope>
</reference>
<name>GABR2_CAEEL</name>
<accession>G5ECB2</accession>
<accession>B7WN65</accession>
<sequence length="842" mass="94861">MSRWLSLLLFAVQAVGGYEAGEELSCKRRHGGIPLPLGVFTVQKEGFPDALPAIRTALSHVHSRSCILQGYRLEMIVKDTHCKTSQGMKALFDLIASRPRPVAILGGQCTEVNEPIAMALKYWQIVQLSYAETHAKFASSDSHELFTTFFRVVPGSRNTNMAKCKFVNHFGWKRVGTVKQNDQPRYALPHEALTTRLEHGFGVKIVHTAGVNWEQIETVGGELDELKERDVRIILVDVDEEMAATVLCAGYHRGMYGDNYVWILPGYHSDKWLNQTHDNCTVEEMREAAKNHFSVEFALTRRDVDTKIVGNTRAGDVWNEITQLDPNNTWRGYLYDGLWTLAIALSHSMGDNAEFSHHKMMEAIDNSSFQGLTGKVKFANNERLGLVDIKQWSDGQYVPFAVYDGADDEFKIIDSTTKGWSPPLDSTITERRREHISSILFLAMSLLALIGIFLALIFLLINFRYRNHRFIKMSSPNLNNIIIAGSICTFASVIMLGLDTRIVSPDVFVWLCYTKTWTLCIGFTLSFGAMFSKTWRVHSIFTNIRMDRKAIKDSKLFIILGILLFIDICVLVTWAFVSPFSYTVTELPHIPEDNIVIIPEVEKCNSSHSGVFQAVLYAVKGVLMILGCFLAWETRHVNVPALNDSKYIGTSVYCCVVMSVLGLSTSVILQERVNEMFSLASFFVIFSTTLTLCLVFVPKVIELARNPVGNEPRAYRRGLMKSVVAKTSQPMSPQPRSDSSGDLIGKAESENKLRRRYLHQKSTQLWDLVEKLRAQGDTRFLQQEWCLSSASPSSQERETSLLLRQPSSSNNREETSLTAAGPNGERSSDWPWVDPDEPSTKL</sequence>
<dbReference type="EMBL" id="EU729335">
    <property type="protein sequence ID" value="ACE63491.1"/>
    <property type="molecule type" value="mRNA"/>
</dbReference>
<dbReference type="EMBL" id="BX284604">
    <property type="protein sequence ID" value="CCD73081.1"/>
    <property type="molecule type" value="Genomic_DNA"/>
</dbReference>
<dbReference type="RefSeq" id="NP_500579.3">
    <property type="nucleotide sequence ID" value="NM_068178.5"/>
</dbReference>
<dbReference type="SMR" id="G5ECB2"/>
<dbReference type="ComplexPortal" id="CPX-1158">
    <property type="entry name" value="GABA-B receptor complex"/>
</dbReference>
<dbReference type="FunCoup" id="G5ECB2">
    <property type="interactions" value="468"/>
</dbReference>
<dbReference type="STRING" id="6239.ZK180.1.1"/>
<dbReference type="GlyCosmos" id="G5ECB2">
    <property type="glycosylation" value="5 sites, No reported glycans"/>
</dbReference>
<dbReference type="PaxDb" id="6239-ZK180.1"/>
<dbReference type="EnsemblMetazoa" id="ZK180.1.1">
    <property type="protein sequence ID" value="ZK180.1.1"/>
    <property type="gene ID" value="WBGene00022675"/>
</dbReference>
<dbReference type="GeneID" id="191240"/>
<dbReference type="KEGG" id="cel:CELE_ZK180.1"/>
<dbReference type="AGR" id="WB:WBGene00022675"/>
<dbReference type="CTD" id="191240"/>
<dbReference type="WormBase" id="ZK180.1">
    <property type="protein sequence ID" value="CE43384"/>
    <property type="gene ID" value="WBGene00022675"/>
    <property type="gene designation" value="gbb-2"/>
</dbReference>
<dbReference type="eggNOG" id="KOG1055">
    <property type="taxonomic scope" value="Eukaryota"/>
</dbReference>
<dbReference type="GeneTree" id="ENSGT00940000171994"/>
<dbReference type="HOGENOM" id="CLU_005240_1_1_1"/>
<dbReference type="InParanoid" id="G5ECB2"/>
<dbReference type="OMA" id="HEMDNIG"/>
<dbReference type="OrthoDB" id="2150267at2759"/>
<dbReference type="PhylomeDB" id="G5ECB2"/>
<dbReference type="Reactome" id="R-CEL-1296041">
    <property type="pathway name" value="Activation of G protein gated Potassium channels"/>
</dbReference>
<dbReference type="Reactome" id="R-CEL-418594">
    <property type="pathway name" value="G alpha (i) signalling events"/>
</dbReference>
<dbReference type="Reactome" id="R-CEL-420499">
    <property type="pathway name" value="Class C/3 (Metabotropic glutamate/pheromone receptors)"/>
</dbReference>
<dbReference type="Reactome" id="R-CEL-977444">
    <property type="pathway name" value="GABA B receptor activation"/>
</dbReference>
<dbReference type="Reactome" id="R-CEL-997272">
    <property type="pathway name" value="Inhibition of voltage gated Ca2+ channels via Gbeta/gamma subunits"/>
</dbReference>
<dbReference type="PRO" id="PR:G5ECB2"/>
<dbReference type="Proteomes" id="UP000001940">
    <property type="component" value="Chromosome IV"/>
</dbReference>
<dbReference type="Bgee" id="WBGene00022675">
    <property type="expression patterns" value="Expressed in larva and 3 other cell types or tissues"/>
</dbReference>
<dbReference type="GO" id="GO:1902712">
    <property type="term" value="C:G protein-coupled GABA receptor complex"/>
    <property type="evidence" value="ECO:0000304"/>
    <property type="project" value="UniProtKB"/>
</dbReference>
<dbReference type="GO" id="GO:0038039">
    <property type="term" value="C:G protein-coupled receptor heterodimeric complex"/>
    <property type="evidence" value="ECO:0000318"/>
    <property type="project" value="GO_Central"/>
</dbReference>
<dbReference type="GO" id="GO:0004965">
    <property type="term" value="F:G protein-coupled GABA receptor activity"/>
    <property type="evidence" value="ECO:0000315"/>
    <property type="project" value="UniProtKB"/>
</dbReference>
<dbReference type="GO" id="GO:0007186">
    <property type="term" value="P:G protein-coupled receptor signaling pathway"/>
    <property type="evidence" value="ECO:0000315"/>
    <property type="project" value="UniProtKB"/>
</dbReference>
<dbReference type="GO" id="GO:0007214">
    <property type="term" value="P:gamma-aminobutyric acid signaling pathway"/>
    <property type="evidence" value="ECO:0000318"/>
    <property type="project" value="GO_Central"/>
</dbReference>
<dbReference type="GO" id="GO:0032223">
    <property type="term" value="P:negative regulation of synaptic transmission, cholinergic"/>
    <property type="evidence" value="ECO:0000315"/>
    <property type="project" value="UniProtKB"/>
</dbReference>
<dbReference type="GO" id="GO:0040012">
    <property type="term" value="P:regulation of locomotion"/>
    <property type="evidence" value="ECO:0000315"/>
    <property type="project" value="ComplexPortal"/>
</dbReference>
<dbReference type="GO" id="GO:0009410">
    <property type="term" value="P:response to xenobiotic stimulus"/>
    <property type="evidence" value="ECO:0000315"/>
    <property type="project" value="UniProtKB"/>
</dbReference>
<dbReference type="CDD" id="cd15294">
    <property type="entry name" value="7tmC_GABA-B-R2"/>
    <property type="match status" value="1"/>
</dbReference>
<dbReference type="CDD" id="cd06366">
    <property type="entry name" value="PBP1_GABAb_receptor"/>
    <property type="match status" value="1"/>
</dbReference>
<dbReference type="FunFam" id="3.40.50.2300:FF:000063">
    <property type="entry name" value="Gamma-aminobutyric acid type B receptor subunit"/>
    <property type="match status" value="1"/>
</dbReference>
<dbReference type="Gene3D" id="3.40.50.2300">
    <property type="match status" value="2"/>
</dbReference>
<dbReference type="InterPro" id="IPR001828">
    <property type="entry name" value="ANF_lig-bd_rcpt"/>
</dbReference>
<dbReference type="InterPro" id="IPR002455">
    <property type="entry name" value="GPCR3_GABA-B"/>
</dbReference>
<dbReference type="InterPro" id="IPR000337">
    <property type="entry name" value="GPCR_3"/>
</dbReference>
<dbReference type="InterPro" id="IPR017978">
    <property type="entry name" value="GPCR_3_C"/>
</dbReference>
<dbReference type="InterPro" id="IPR028082">
    <property type="entry name" value="Peripla_BP_I"/>
</dbReference>
<dbReference type="PANTHER" id="PTHR10519">
    <property type="entry name" value="GABA-B RECEPTOR"/>
    <property type="match status" value="1"/>
</dbReference>
<dbReference type="PANTHER" id="PTHR10519:SF74">
    <property type="entry name" value="GAMMA-AMINOBUTYRIC ACID TYPE B RECEPTOR SUBUNIT 2"/>
    <property type="match status" value="1"/>
</dbReference>
<dbReference type="Pfam" id="PF00003">
    <property type="entry name" value="7tm_3"/>
    <property type="match status" value="1"/>
</dbReference>
<dbReference type="Pfam" id="PF01094">
    <property type="entry name" value="ANF_receptor"/>
    <property type="match status" value="1"/>
</dbReference>
<dbReference type="PRINTS" id="PR01177">
    <property type="entry name" value="GABAB1RECPTR"/>
</dbReference>
<dbReference type="PRINTS" id="PR01176">
    <property type="entry name" value="GABABRECEPTR"/>
</dbReference>
<dbReference type="PRINTS" id="PR00248">
    <property type="entry name" value="GPCRMGR"/>
</dbReference>
<dbReference type="SUPFAM" id="SSF53822">
    <property type="entry name" value="Periplasmic binding protein-like I"/>
    <property type="match status" value="1"/>
</dbReference>
<dbReference type="PROSITE" id="PS00196">
    <property type="entry name" value="COPPER_BLUE"/>
    <property type="match status" value="1"/>
</dbReference>
<dbReference type="PROSITE" id="PS50259">
    <property type="entry name" value="G_PROTEIN_RECEP_F3_4"/>
    <property type="match status" value="1"/>
</dbReference>
<evidence type="ECO:0000250" key="1">
    <source>
        <dbReference type="UniProtKB" id="O75899"/>
    </source>
</evidence>
<evidence type="ECO:0000250" key="2">
    <source>
        <dbReference type="UniProtKB" id="O88871"/>
    </source>
</evidence>
<evidence type="ECO:0000255" key="3"/>
<evidence type="ECO:0000255" key="4">
    <source>
        <dbReference type="PROSITE-ProRule" id="PRU00498"/>
    </source>
</evidence>
<evidence type="ECO:0000256" key="5">
    <source>
        <dbReference type="SAM" id="MobiDB-lite"/>
    </source>
</evidence>
<evidence type="ECO:0000269" key="6">
    <source>
    </source>
</evidence>
<evidence type="ECO:0000269" key="7">
    <source>
    </source>
</evidence>
<evidence type="ECO:0000303" key="8">
    <source>
    </source>
</evidence>
<evidence type="ECO:0000305" key="9"/>
<evidence type="ECO:0000305" key="10">
    <source>
    </source>
</evidence>
<evidence type="ECO:0000312" key="11">
    <source>
        <dbReference type="EMBL" id="ACE63491.1"/>
    </source>
</evidence>
<evidence type="ECO:0000312" key="12">
    <source>
        <dbReference type="Proteomes" id="UP000001940"/>
    </source>
</evidence>
<evidence type="ECO:0000312" key="13">
    <source>
        <dbReference type="WormBase" id="ZK180.1"/>
    </source>
</evidence>
<comment type="function">
    <text evidence="2 6 7">Component of a heterodimeric G-protein coupled receptor for GABA, formed by gbb-1 and gbb-2 (By similarity). Within the heterodimeric GABA receptor, only gbb-1 seems to bind agonists, while gbb-2 mediates coupling to G proteins (By similarity). Ligand binding causes a conformation change that triggers signaling via guanine nucleotide-binding proteins (G proteins) and modulates the activity of down-stream effectors, such as adenylate cyclase (By similarity). Signaling inhibits adenylate cyclase, stimulates phospholipase A2, activates potassium channels, inactivates voltage-dependent calcium-channels and modulates inositol phospholipid hydrolysis (By similarity). Plays a critical role in the fine-tuning of inhibitory synaptic transmission (By similarity). Pre-synaptic GABA receptor inhibits neurotransmitter release by down-regulating high-voltage activated calcium channels, whereas postsynaptic GABA receptor decreases neuronal excitability by activating a prominent inwardly rectifying potassium (Kir) conductance that underlies the late inhibitory postsynaptic potentials (By similarity). Along with gbb-1, may couple to the G(o)-alpha G-protein goa-1 to negatively regulate cholinergic receptor activity in the presence of high levels of acetylcholine in ventral cord motor neurons (PubMed:18614679). As acetylcholine depolarizes body wall muscles, modulation of acetylcholine levels most likely results in the control of locomotory behavior (PubMed:18614679). Regulates locomotory behavior in response to GABA release by GABAergic motor neurons (PubMed:18614679, PubMed:21613582).</text>
</comment>
<comment type="subunit">
    <text evidence="10">May form a heterodimer with gbb-1.</text>
</comment>
<comment type="subcellular location">
    <subcellularLocation>
        <location evidence="1">Cell membrane</location>
        <topology evidence="3">Multi-pass membrane protein</topology>
    </subcellularLocation>
</comment>
<comment type="tissue specificity">
    <text evidence="7">Expressed in cholinergic motor neurons.</text>
</comment>
<comment type="domain">
    <text evidence="1">Alpha-helical parts of the C-terminal intracellular region may mediate heterodimeric interaction with gbb-1.</text>
</comment>
<comment type="disruption phenotype">
    <text evidence="6 7">Increased sensitivity to the acetylcholine esterase inhibitor Aldicarb, which results in accelerated paralysis likely due to enhanced acetylcholine release by ventral cord neurons and enhanced depolarization of muscles on one side of the body (PubMed:18614679). Increased locomotion and body curvature (deeper bends) in response to induced GABA release of GABAergic motor neurons, which in wild-type animals results in acute body relaxation (PubMed:21613582). Double knockout with gbb-1 also results in increased sensitivity to Aldicarb and accelerated paralysis, but in addition results in irregular locomotory behavior characterized by increased speed of locomotion, decreased turning frequency, reduced rate of reversals, and an increased maximal distance covered in a 40 second interval (PubMed:18614679). Double knockout with the muscarinic acetylcholine receptor gar-2 results in a slight increase in sensitivity to Aldicarb and accelerated paralysis 50 minutes following exposure to Aldicarb as compared to the gar-2 and gbb-2 single mutants (PubMed:18614679). Double knockout with the GABA(A) receptor unc-49 results in body elongation defects in response to induced GABA release of GABAergic motor neurons (PubMed:21613582).</text>
</comment>
<comment type="similarity">
    <text evidence="9">Belongs to the G-protein coupled receptor 3 family.</text>
</comment>
<protein>
    <recommendedName>
        <fullName evidence="9">Gamma-aminobutyric acid type B receptor subunit 2</fullName>
    </recommendedName>
</protein>
<feature type="signal peptide" evidence="3">
    <location>
        <begin position="1"/>
        <end position="17"/>
    </location>
</feature>
<feature type="chain" id="PRO_5010674398" description="Gamma-aminobutyric acid type B receptor subunit 2" evidence="9">
    <location>
        <begin position="18"/>
        <end position="842"/>
    </location>
</feature>
<feature type="topological domain" description="Extracellular" evidence="9">
    <location>
        <begin position="18"/>
        <end position="438"/>
    </location>
</feature>
<feature type="transmembrane region" description="Helical; Name=1" evidence="3">
    <location>
        <begin position="439"/>
        <end position="459"/>
    </location>
</feature>
<feature type="topological domain" description="Cytoplasmic" evidence="9">
    <location>
        <begin position="460"/>
        <end position="477"/>
    </location>
</feature>
<feature type="transmembrane region" description="Helical; Name=2" evidence="3">
    <location>
        <begin position="478"/>
        <end position="498"/>
    </location>
</feature>
<feature type="topological domain" description="Extracellular" evidence="9">
    <location>
        <begin position="499"/>
        <end position="506"/>
    </location>
</feature>
<feature type="transmembrane region" description="Helical; Name=3" evidence="3">
    <location>
        <begin position="507"/>
        <end position="527"/>
    </location>
</feature>
<feature type="topological domain" description="Cytoplasmic" evidence="9">
    <location>
        <begin position="528"/>
        <end position="556"/>
    </location>
</feature>
<feature type="transmembrane region" description="Helical; Name=4" evidence="3">
    <location>
        <begin position="557"/>
        <end position="577"/>
    </location>
</feature>
<feature type="topological domain" description="Extracellular" evidence="9">
    <location>
        <begin position="578"/>
        <end position="610"/>
    </location>
</feature>
<feature type="transmembrane region" description="Helical; Name=5" evidence="3">
    <location>
        <begin position="611"/>
        <end position="631"/>
    </location>
</feature>
<feature type="topological domain" description="Cytoplasmic" evidence="9">
    <location>
        <begin position="632"/>
        <end position="647"/>
    </location>
</feature>
<feature type="transmembrane region" description="Helical; Name=6" evidence="3">
    <location>
        <begin position="648"/>
        <end position="668"/>
    </location>
</feature>
<feature type="topological domain" description="Extracellular" evidence="9">
    <location>
        <begin position="669"/>
        <end position="676"/>
    </location>
</feature>
<feature type="transmembrane region" description="Helical; Name=7" evidence="3">
    <location>
        <begin position="677"/>
        <end position="697"/>
    </location>
</feature>
<feature type="topological domain" description="Cytoplasmic" evidence="9">
    <location>
        <begin position="698"/>
        <end position="842"/>
    </location>
</feature>
<feature type="region of interest" description="Disordered" evidence="5">
    <location>
        <begin position="725"/>
        <end position="744"/>
    </location>
</feature>
<feature type="region of interest" description="Disordered" evidence="5">
    <location>
        <begin position="791"/>
        <end position="842"/>
    </location>
</feature>
<feature type="compositionally biased region" description="Polar residues" evidence="5">
    <location>
        <begin position="725"/>
        <end position="740"/>
    </location>
</feature>
<feature type="glycosylation site" description="N-linked (GlcNAc...) asparagine" evidence="4">
    <location>
        <position position="274"/>
    </location>
</feature>
<feature type="glycosylation site" description="N-linked (GlcNAc...) asparagine" evidence="4">
    <location>
        <position position="279"/>
    </location>
</feature>
<feature type="glycosylation site" description="N-linked (GlcNAc...) asparagine" evidence="4">
    <location>
        <position position="327"/>
    </location>
</feature>
<feature type="glycosylation site" description="N-linked (GlcNAc...) asparagine" evidence="4">
    <location>
        <position position="366"/>
    </location>
</feature>
<feature type="glycosylation site" description="N-linked (GlcNAc...) asparagine" evidence="4">
    <location>
        <position position="605"/>
    </location>
</feature>
<feature type="mutagenesis site" description="No change in protein function; when associated with A-572." evidence="7">
    <original>A</original>
    <variation>V</variation>
    <location>
        <position position="484"/>
    </location>
</feature>
<feature type="mutagenesis site" description="No change in protein function; when associated with V-484." evidence="7">
    <original>V</original>
    <variation>A</variation>
    <location>
        <position position="572"/>
    </location>
</feature>
<keyword id="KW-1003">Cell membrane</keyword>
<keyword id="KW-0297">G-protein coupled receptor</keyword>
<keyword id="KW-0325">Glycoprotein</keyword>
<keyword id="KW-0472">Membrane</keyword>
<keyword id="KW-0675">Receptor</keyword>
<keyword id="KW-1185">Reference proteome</keyword>
<keyword id="KW-0732">Signal</keyword>
<keyword id="KW-0807">Transducer</keyword>
<keyword id="KW-0812">Transmembrane</keyword>
<keyword id="KW-1133">Transmembrane helix</keyword>
<gene>
    <name evidence="8 13" type="primary">gbb-2</name>
    <name evidence="13" type="ORF">ZK180.1</name>
</gene>
<organism evidence="12">
    <name type="scientific">Caenorhabditis elegans</name>
    <dbReference type="NCBI Taxonomy" id="6239"/>
    <lineage>
        <taxon>Eukaryota</taxon>
        <taxon>Metazoa</taxon>
        <taxon>Ecdysozoa</taxon>
        <taxon>Nematoda</taxon>
        <taxon>Chromadorea</taxon>
        <taxon>Rhabditida</taxon>
        <taxon>Rhabditina</taxon>
        <taxon>Rhabditomorpha</taxon>
        <taxon>Rhabditoidea</taxon>
        <taxon>Rhabditidae</taxon>
        <taxon>Peloderinae</taxon>
        <taxon>Caenorhabditis</taxon>
    </lineage>
</organism>
<proteinExistence type="evidence at protein level"/>